<gene>
    <name type="ordered locus">AF_0619</name>
</gene>
<sequence length="36" mass="4285">MKKYGEIRWSEVVRKAIAEYLEKLEEIETEVGSKEL</sequence>
<feature type="chain" id="PRO_0000127901" description="Uncharacterized protein AF_0619">
    <location>
        <begin position="1"/>
        <end position="36"/>
    </location>
</feature>
<reference key="1">
    <citation type="journal article" date="1997" name="Nature">
        <title>The complete genome sequence of the hyperthermophilic, sulphate-reducing archaeon Archaeoglobus fulgidus.</title>
        <authorList>
            <person name="Klenk H.-P."/>
            <person name="Clayton R.A."/>
            <person name="Tomb J.-F."/>
            <person name="White O."/>
            <person name="Nelson K.E."/>
            <person name="Ketchum K.A."/>
            <person name="Dodson R.J."/>
            <person name="Gwinn M.L."/>
            <person name="Hickey E.K."/>
            <person name="Peterson J.D."/>
            <person name="Richardson D.L."/>
            <person name="Kerlavage A.R."/>
            <person name="Graham D.E."/>
            <person name="Kyrpides N.C."/>
            <person name="Fleischmann R.D."/>
            <person name="Quackenbush J."/>
            <person name="Lee N.H."/>
            <person name="Sutton G.G."/>
            <person name="Gill S.R."/>
            <person name="Kirkness E.F."/>
            <person name="Dougherty B.A."/>
            <person name="McKenney K."/>
            <person name="Adams M.D."/>
            <person name="Loftus B.J."/>
            <person name="Peterson S.N."/>
            <person name="Reich C.I."/>
            <person name="McNeil L.K."/>
            <person name="Badger J.H."/>
            <person name="Glodek A."/>
            <person name="Zhou L."/>
            <person name="Overbeek R."/>
            <person name="Gocayne J.D."/>
            <person name="Weidman J.F."/>
            <person name="McDonald L.A."/>
            <person name="Utterback T.R."/>
            <person name="Cotton M.D."/>
            <person name="Spriggs T."/>
            <person name="Artiach P."/>
            <person name="Kaine B.P."/>
            <person name="Sykes S.M."/>
            <person name="Sadow P.W."/>
            <person name="D'Andrea K.P."/>
            <person name="Bowman C."/>
            <person name="Fujii C."/>
            <person name="Garland S.A."/>
            <person name="Mason T.M."/>
            <person name="Olsen G.J."/>
            <person name="Fraser C.M."/>
            <person name="Smith H.O."/>
            <person name="Woese C.R."/>
            <person name="Venter J.C."/>
        </authorList>
    </citation>
    <scope>NUCLEOTIDE SEQUENCE [LARGE SCALE GENOMIC DNA]</scope>
    <source>
        <strain>ATCC 49558 / DSM 4304 / JCM 9628 / NBRC 100126 / VC-16</strain>
    </source>
</reference>
<keyword id="KW-1185">Reference proteome</keyword>
<accession>O29636</accession>
<organism>
    <name type="scientific">Archaeoglobus fulgidus (strain ATCC 49558 / DSM 4304 / JCM 9628 / NBRC 100126 / VC-16)</name>
    <dbReference type="NCBI Taxonomy" id="224325"/>
    <lineage>
        <taxon>Archaea</taxon>
        <taxon>Methanobacteriati</taxon>
        <taxon>Methanobacteriota</taxon>
        <taxon>Archaeoglobi</taxon>
        <taxon>Archaeoglobales</taxon>
        <taxon>Archaeoglobaceae</taxon>
        <taxon>Archaeoglobus</taxon>
    </lineage>
</organism>
<name>Y619_ARCFU</name>
<proteinExistence type="predicted"/>
<protein>
    <recommendedName>
        <fullName>Uncharacterized protein AF_0619</fullName>
    </recommendedName>
</protein>
<dbReference type="EMBL" id="AE000782">
    <property type="protein sequence ID" value="AAB90628.1"/>
    <property type="molecule type" value="Genomic_DNA"/>
</dbReference>
<dbReference type="PIR" id="C69327">
    <property type="entry name" value="C69327"/>
</dbReference>
<dbReference type="SMR" id="O29636"/>
<dbReference type="STRING" id="224325.AF_0619"/>
<dbReference type="PaxDb" id="224325-AF_0619"/>
<dbReference type="EnsemblBacteria" id="AAB90628">
    <property type="protein sequence ID" value="AAB90628"/>
    <property type="gene ID" value="AF_0619"/>
</dbReference>
<dbReference type="KEGG" id="afu:AF_0619"/>
<dbReference type="HOGENOM" id="CLU_213584_0_0_2"/>
<dbReference type="Proteomes" id="UP000002199">
    <property type="component" value="Chromosome"/>
</dbReference>